<accession>Q1I447</accession>
<gene>
    <name evidence="1" type="primary">mutL</name>
    <name type="ordered locus">PSEEN4945</name>
</gene>
<sequence>MSGGSRIQLLSPRLANQIAAGEVVERPASVAKELLENSLDSGARRIEVEVEQGGVKLLRVRDNGGGIAPDDLPLALARHATSKIRELEDLEGVLSLGFRGEALASISSVARLTLTSRTADAGEAWQVETEGRDMTPRVQPAAHPVGTSVEVRDLFFNTPARRKFLKAEKTEFDHLQEVIRRLALARFDVGFHLRHNGKTIFSLHEATDEMARARRVGTICGPGFLEQALPIDVERNGLRLWGWVGLPTFSRSQADLQYFFVNGRAVRDKLVAHAVRQAYRDVLFNGRHPTFVLFLECDPTGVDVNVHPTKHEVRFREGRMVHDFLYGTLHRALADVRPEDQLAAPAAASEIVRPSGQQVGEFGPQGEMRLASPVLEQPQAEPRQSFTPGSGAGSGYQYQYTPRPSQPLPVAETQAVYREFYAPLDGTAPASLPESQGDIPPLGYALAQLKGIYILAENAVGLVLVDMHAAHERIMYERLKVAMASEGLSGQPLLVPESLALSQREADCAEEHAQWFQRLGFELQRLGPETVAIRQIPALLKQAEANRLVQDVLADLMEYGTSDRIQAHLNELLGTMACHGAVRANRRLAIPEMNALLRDMENTERSGQCNHGRPTWTQMGLDDLDKLFLRGR</sequence>
<comment type="function">
    <text evidence="1">This protein is involved in the repair of mismatches in DNA. It is required for dam-dependent methyl-directed DNA mismatch repair. May act as a 'molecular matchmaker', a protein that promotes the formation of a stable complex between two or more DNA-binding proteins in an ATP-dependent manner without itself being part of a final effector complex.</text>
</comment>
<comment type="similarity">
    <text evidence="1">Belongs to the DNA mismatch repair MutL/HexB family.</text>
</comment>
<organism>
    <name type="scientific">Pseudomonas entomophila (strain L48)</name>
    <dbReference type="NCBI Taxonomy" id="384676"/>
    <lineage>
        <taxon>Bacteria</taxon>
        <taxon>Pseudomonadati</taxon>
        <taxon>Pseudomonadota</taxon>
        <taxon>Gammaproteobacteria</taxon>
        <taxon>Pseudomonadales</taxon>
        <taxon>Pseudomonadaceae</taxon>
        <taxon>Pseudomonas</taxon>
    </lineage>
</organism>
<keyword id="KW-0227">DNA damage</keyword>
<keyword id="KW-0234">DNA repair</keyword>
<dbReference type="EMBL" id="CT573326">
    <property type="protein sequence ID" value="CAK17589.1"/>
    <property type="molecule type" value="Genomic_DNA"/>
</dbReference>
<dbReference type="RefSeq" id="WP_011535950.1">
    <property type="nucleotide sequence ID" value="NC_008027.1"/>
</dbReference>
<dbReference type="SMR" id="Q1I447"/>
<dbReference type="STRING" id="384676.PSEEN4945"/>
<dbReference type="GeneID" id="32807893"/>
<dbReference type="KEGG" id="pen:PSEEN4945"/>
<dbReference type="eggNOG" id="COG0323">
    <property type="taxonomic scope" value="Bacteria"/>
</dbReference>
<dbReference type="HOGENOM" id="CLU_004131_4_2_6"/>
<dbReference type="OrthoDB" id="9763467at2"/>
<dbReference type="Proteomes" id="UP000000658">
    <property type="component" value="Chromosome"/>
</dbReference>
<dbReference type="GO" id="GO:0032300">
    <property type="term" value="C:mismatch repair complex"/>
    <property type="evidence" value="ECO:0007669"/>
    <property type="project" value="InterPro"/>
</dbReference>
<dbReference type="GO" id="GO:0005524">
    <property type="term" value="F:ATP binding"/>
    <property type="evidence" value="ECO:0007669"/>
    <property type="project" value="InterPro"/>
</dbReference>
<dbReference type="GO" id="GO:0016887">
    <property type="term" value="F:ATP hydrolysis activity"/>
    <property type="evidence" value="ECO:0007669"/>
    <property type="project" value="InterPro"/>
</dbReference>
<dbReference type="GO" id="GO:0140664">
    <property type="term" value="F:ATP-dependent DNA damage sensor activity"/>
    <property type="evidence" value="ECO:0007669"/>
    <property type="project" value="InterPro"/>
</dbReference>
<dbReference type="GO" id="GO:0030983">
    <property type="term" value="F:mismatched DNA binding"/>
    <property type="evidence" value="ECO:0007669"/>
    <property type="project" value="InterPro"/>
</dbReference>
<dbReference type="GO" id="GO:0006298">
    <property type="term" value="P:mismatch repair"/>
    <property type="evidence" value="ECO:0007669"/>
    <property type="project" value="UniProtKB-UniRule"/>
</dbReference>
<dbReference type="CDD" id="cd16926">
    <property type="entry name" value="HATPase_MutL-MLH-PMS-like"/>
    <property type="match status" value="1"/>
</dbReference>
<dbReference type="CDD" id="cd03482">
    <property type="entry name" value="MutL_Trans_MutL"/>
    <property type="match status" value="1"/>
</dbReference>
<dbReference type="FunFam" id="3.30.230.10:FF:000013">
    <property type="entry name" value="DNA mismatch repair endonuclease MutL"/>
    <property type="match status" value="1"/>
</dbReference>
<dbReference type="FunFam" id="3.30.565.10:FF:000003">
    <property type="entry name" value="DNA mismatch repair endonuclease MutL"/>
    <property type="match status" value="1"/>
</dbReference>
<dbReference type="FunFam" id="3.30.1370.100:FF:000005">
    <property type="entry name" value="DNA mismatch repair protein MutL"/>
    <property type="match status" value="1"/>
</dbReference>
<dbReference type="Gene3D" id="3.30.230.10">
    <property type="match status" value="1"/>
</dbReference>
<dbReference type="Gene3D" id="3.30.565.10">
    <property type="entry name" value="Histidine kinase-like ATPase, C-terminal domain"/>
    <property type="match status" value="1"/>
</dbReference>
<dbReference type="Gene3D" id="3.30.1540.20">
    <property type="entry name" value="MutL, C-terminal domain, dimerisation subdomain"/>
    <property type="match status" value="1"/>
</dbReference>
<dbReference type="Gene3D" id="3.30.1370.100">
    <property type="entry name" value="MutL, C-terminal domain, regulatory subdomain"/>
    <property type="match status" value="1"/>
</dbReference>
<dbReference type="HAMAP" id="MF_00149">
    <property type="entry name" value="DNA_mis_repair"/>
    <property type="match status" value="1"/>
</dbReference>
<dbReference type="InterPro" id="IPR014762">
    <property type="entry name" value="DNA_mismatch_repair_CS"/>
</dbReference>
<dbReference type="InterPro" id="IPR020667">
    <property type="entry name" value="DNA_mismatch_repair_MutL"/>
</dbReference>
<dbReference type="InterPro" id="IPR013507">
    <property type="entry name" value="DNA_mismatch_S5_2-like"/>
</dbReference>
<dbReference type="InterPro" id="IPR036890">
    <property type="entry name" value="HATPase_C_sf"/>
</dbReference>
<dbReference type="InterPro" id="IPR002099">
    <property type="entry name" value="MutL/Mlh/PMS"/>
</dbReference>
<dbReference type="InterPro" id="IPR038973">
    <property type="entry name" value="MutL/Mlh/Pms-like"/>
</dbReference>
<dbReference type="InterPro" id="IPR014790">
    <property type="entry name" value="MutL_C"/>
</dbReference>
<dbReference type="InterPro" id="IPR042120">
    <property type="entry name" value="MutL_C_dimsub"/>
</dbReference>
<dbReference type="InterPro" id="IPR042121">
    <property type="entry name" value="MutL_C_regsub"/>
</dbReference>
<dbReference type="InterPro" id="IPR037198">
    <property type="entry name" value="MutL_C_sf"/>
</dbReference>
<dbReference type="InterPro" id="IPR020568">
    <property type="entry name" value="Ribosomal_Su5_D2-typ_SF"/>
</dbReference>
<dbReference type="InterPro" id="IPR014721">
    <property type="entry name" value="Ribsml_uS5_D2-typ_fold_subgr"/>
</dbReference>
<dbReference type="NCBIfam" id="TIGR00585">
    <property type="entry name" value="mutl"/>
    <property type="match status" value="1"/>
</dbReference>
<dbReference type="NCBIfam" id="NF000949">
    <property type="entry name" value="PRK00095.1-2"/>
    <property type="match status" value="1"/>
</dbReference>
<dbReference type="PANTHER" id="PTHR10073">
    <property type="entry name" value="DNA MISMATCH REPAIR PROTEIN MLH, PMS, MUTL"/>
    <property type="match status" value="1"/>
</dbReference>
<dbReference type="PANTHER" id="PTHR10073:SF12">
    <property type="entry name" value="DNA MISMATCH REPAIR PROTEIN MLH1"/>
    <property type="match status" value="1"/>
</dbReference>
<dbReference type="Pfam" id="PF01119">
    <property type="entry name" value="DNA_mis_repair"/>
    <property type="match status" value="1"/>
</dbReference>
<dbReference type="Pfam" id="PF13589">
    <property type="entry name" value="HATPase_c_3"/>
    <property type="match status" value="1"/>
</dbReference>
<dbReference type="Pfam" id="PF08676">
    <property type="entry name" value="MutL_C"/>
    <property type="match status" value="1"/>
</dbReference>
<dbReference type="SMART" id="SM01340">
    <property type="entry name" value="DNA_mis_repair"/>
    <property type="match status" value="1"/>
</dbReference>
<dbReference type="SMART" id="SM00853">
    <property type="entry name" value="MutL_C"/>
    <property type="match status" value="1"/>
</dbReference>
<dbReference type="SUPFAM" id="SSF55874">
    <property type="entry name" value="ATPase domain of HSP90 chaperone/DNA topoisomerase II/histidine kinase"/>
    <property type="match status" value="1"/>
</dbReference>
<dbReference type="SUPFAM" id="SSF118116">
    <property type="entry name" value="DNA mismatch repair protein MutL"/>
    <property type="match status" value="1"/>
</dbReference>
<dbReference type="SUPFAM" id="SSF54211">
    <property type="entry name" value="Ribosomal protein S5 domain 2-like"/>
    <property type="match status" value="1"/>
</dbReference>
<dbReference type="PROSITE" id="PS00058">
    <property type="entry name" value="DNA_MISMATCH_REPAIR_1"/>
    <property type="match status" value="1"/>
</dbReference>
<reference key="1">
    <citation type="journal article" date="2006" name="Nat. Biotechnol.">
        <title>Complete genome sequence of the entomopathogenic and metabolically versatile soil bacterium Pseudomonas entomophila.</title>
        <authorList>
            <person name="Vodovar N."/>
            <person name="Vallenet D."/>
            <person name="Cruveiller S."/>
            <person name="Rouy Z."/>
            <person name="Barbe V."/>
            <person name="Acosta C."/>
            <person name="Cattolico L."/>
            <person name="Jubin C."/>
            <person name="Lajus A."/>
            <person name="Segurens B."/>
            <person name="Vacherie B."/>
            <person name="Wincker P."/>
            <person name="Weissenbach J."/>
            <person name="Lemaitre B."/>
            <person name="Medigue C."/>
            <person name="Boccard F."/>
        </authorList>
    </citation>
    <scope>NUCLEOTIDE SEQUENCE [LARGE SCALE GENOMIC DNA]</scope>
    <source>
        <strain>L48</strain>
    </source>
</reference>
<protein>
    <recommendedName>
        <fullName evidence="1">DNA mismatch repair protein MutL</fullName>
    </recommendedName>
</protein>
<proteinExistence type="inferred from homology"/>
<evidence type="ECO:0000255" key="1">
    <source>
        <dbReference type="HAMAP-Rule" id="MF_00149"/>
    </source>
</evidence>
<evidence type="ECO:0000256" key="2">
    <source>
        <dbReference type="SAM" id="MobiDB-lite"/>
    </source>
</evidence>
<name>MUTL_PSEE4</name>
<feature type="chain" id="PRO_1000010059" description="DNA mismatch repair protein MutL">
    <location>
        <begin position="1"/>
        <end position="632"/>
    </location>
</feature>
<feature type="region of interest" description="Disordered" evidence="2">
    <location>
        <begin position="376"/>
        <end position="397"/>
    </location>
</feature>